<feature type="chain" id="PRO_0000177520" description="Translation initiation factor IF-3">
    <location>
        <begin position="1"/>
        <end position="188"/>
    </location>
</feature>
<gene>
    <name evidence="1" type="primary">infC</name>
    <name type="ordered locus">FN0327</name>
</gene>
<organism>
    <name type="scientific">Fusobacterium nucleatum subsp. nucleatum (strain ATCC 25586 / DSM 15643 / BCRC 10681 / CIP 101130 / JCM 8532 / KCTC 2640 / LMG 13131 / VPI 4355)</name>
    <dbReference type="NCBI Taxonomy" id="190304"/>
    <lineage>
        <taxon>Bacteria</taxon>
        <taxon>Fusobacteriati</taxon>
        <taxon>Fusobacteriota</taxon>
        <taxon>Fusobacteriia</taxon>
        <taxon>Fusobacteriales</taxon>
        <taxon>Fusobacteriaceae</taxon>
        <taxon>Fusobacterium</taxon>
    </lineage>
</organism>
<evidence type="ECO:0000255" key="1">
    <source>
        <dbReference type="HAMAP-Rule" id="MF_00080"/>
    </source>
</evidence>
<protein>
    <recommendedName>
        <fullName evidence="1">Translation initiation factor IF-3</fullName>
    </recommendedName>
</protein>
<accession>Q8R5Y3</accession>
<proteinExistence type="inferred from homology"/>
<name>IF3_FUSNN</name>
<keyword id="KW-0963">Cytoplasm</keyword>
<keyword id="KW-0396">Initiation factor</keyword>
<keyword id="KW-0648">Protein biosynthesis</keyword>
<keyword id="KW-1185">Reference proteome</keyword>
<sequence length="188" mass="21838">MYFRTGFCLFYFFQWRCSVISDKTRINEKIRGKEFRIISFDGEQLGIMTAEQALNLASSQGYDLVEIAPSATPPVCKIMDYSKYKYEQTRKLKEAKKNQKQVVIKEIKVTARIDSHDLETKLNQVTKFLEKENKVKVTLVLFGREKMHANLGVTTLDEIAEKFSETAEVEKKYADKQKHLILSPKKVK</sequence>
<reference key="1">
    <citation type="journal article" date="2002" name="J. Bacteriol.">
        <title>Genome sequence and analysis of the oral bacterium Fusobacterium nucleatum strain ATCC 25586.</title>
        <authorList>
            <person name="Kapatral V."/>
            <person name="Anderson I."/>
            <person name="Ivanova N."/>
            <person name="Reznik G."/>
            <person name="Los T."/>
            <person name="Lykidis A."/>
            <person name="Bhattacharyya A."/>
            <person name="Bartman A."/>
            <person name="Gardner W."/>
            <person name="Grechkin G."/>
            <person name="Zhu L."/>
            <person name="Vasieva O."/>
            <person name="Chu L."/>
            <person name="Kogan Y."/>
            <person name="Chaga O."/>
            <person name="Goltsman E."/>
            <person name="Bernal A."/>
            <person name="Larsen N."/>
            <person name="D'Souza M."/>
            <person name="Walunas T."/>
            <person name="Pusch G."/>
            <person name="Haselkorn R."/>
            <person name="Fonstein M."/>
            <person name="Kyrpides N.C."/>
            <person name="Overbeek R."/>
        </authorList>
    </citation>
    <scope>NUCLEOTIDE SEQUENCE [LARGE SCALE GENOMIC DNA]</scope>
    <source>
        <strain>ATCC 25586 / DSM 15643 / BCRC 10681 / CIP 101130 / JCM 8532 / KCTC 2640 / LMG 13131 / VPI 4355</strain>
    </source>
</reference>
<dbReference type="EMBL" id="AE009951">
    <property type="protein sequence ID" value="AAL94531.1"/>
    <property type="molecule type" value="Genomic_DNA"/>
</dbReference>
<dbReference type="RefSeq" id="NP_603232.1">
    <property type="nucleotide sequence ID" value="NC_003454.1"/>
</dbReference>
<dbReference type="RefSeq" id="WP_005901608.1">
    <property type="nucleotide sequence ID" value="NZ_OZ209243.1"/>
</dbReference>
<dbReference type="SMR" id="Q8R5Y3"/>
<dbReference type="FunCoup" id="Q8R5Y3">
    <property type="interactions" value="378"/>
</dbReference>
<dbReference type="STRING" id="190304.FN0327"/>
<dbReference type="PaxDb" id="190304-FN0327"/>
<dbReference type="EnsemblBacteria" id="AAL94531">
    <property type="protein sequence ID" value="AAL94531"/>
    <property type="gene ID" value="FN0327"/>
</dbReference>
<dbReference type="GeneID" id="79783336"/>
<dbReference type="KEGG" id="fnu:FN0327"/>
<dbReference type="PATRIC" id="fig|190304.8.peg.905"/>
<dbReference type="eggNOG" id="COG0290">
    <property type="taxonomic scope" value="Bacteria"/>
</dbReference>
<dbReference type="HOGENOM" id="CLU_054919_3_2_0"/>
<dbReference type="InParanoid" id="Q8R5Y3"/>
<dbReference type="BioCyc" id="FNUC190304:G1FZS-924-MONOMER"/>
<dbReference type="Proteomes" id="UP000002521">
    <property type="component" value="Chromosome"/>
</dbReference>
<dbReference type="GO" id="GO:0005829">
    <property type="term" value="C:cytosol"/>
    <property type="evidence" value="ECO:0000318"/>
    <property type="project" value="GO_Central"/>
</dbReference>
<dbReference type="GO" id="GO:0043022">
    <property type="term" value="F:ribosome binding"/>
    <property type="evidence" value="ECO:0000318"/>
    <property type="project" value="GO_Central"/>
</dbReference>
<dbReference type="GO" id="GO:0003743">
    <property type="term" value="F:translation initiation factor activity"/>
    <property type="evidence" value="ECO:0000318"/>
    <property type="project" value="GO_Central"/>
</dbReference>
<dbReference type="GO" id="GO:0032790">
    <property type="term" value="P:ribosome disassembly"/>
    <property type="evidence" value="ECO:0000318"/>
    <property type="project" value="GO_Central"/>
</dbReference>
<dbReference type="FunFam" id="3.10.20.80:FF:000001">
    <property type="entry name" value="Translation initiation factor IF-3"/>
    <property type="match status" value="1"/>
</dbReference>
<dbReference type="Gene3D" id="3.30.110.10">
    <property type="entry name" value="Translation initiation factor 3 (IF-3), C-terminal domain"/>
    <property type="match status" value="1"/>
</dbReference>
<dbReference type="Gene3D" id="3.10.20.80">
    <property type="entry name" value="Translation initiation factor 3 (IF-3), N-terminal domain"/>
    <property type="match status" value="1"/>
</dbReference>
<dbReference type="HAMAP" id="MF_00080">
    <property type="entry name" value="IF_3"/>
    <property type="match status" value="1"/>
</dbReference>
<dbReference type="InterPro" id="IPR036788">
    <property type="entry name" value="T_IF-3_C_sf"/>
</dbReference>
<dbReference type="InterPro" id="IPR036787">
    <property type="entry name" value="T_IF-3_N_sf"/>
</dbReference>
<dbReference type="InterPro" id="IPR019813">
    <property type="entry name" value="Translation_initiation_fac3_CS"/>
</dbReference>
<dbReference type="InterPro" id="IPR001288">
    <property type="entry name" value="Translation_initiation_fac_3"/>
</dbReference>
<dbReference type="InterPro" id="IPR019815">
    <property type="entry name" value="Translation_initiation_fac_3_C"/>
</dbReference>
<dbReference type="InterPro" id="IPR019814">
    <property type="entry name" value="Translation_initiation_fac_3_N"/>
</dbReference>
<dbReference type="NCBIfam" id="TIGR00168">
    <property type="entry name" value="infC"/>
    <property type="match status" value="1"/>
</dbReference>
<dbReference type="PANTHER" id="PTHR10938">
    <property type="entry name" value="TRANSLATION INITIATION FACTOR IF-3"/>
    <property type="match status" value="1"/>
</dbReference>
<dbReference type="PANTHER" id="PTHR10938:SF0">
    <property type="entry name" value="TRANSLATION INITIATION FACTOR IF-3, MITOCHONDRIAL"/>
    <property type="match status" value="1"/>
</dbReference>
<dbReference type="Pfam" id="PF00707">
    <property type="entry name" value="IF3_C"/>
    <property type="match status" value="1"/>
</dbReference>
<dbReference type="Pfam" id="PF05198">
    <property type="entry name" value="IF3_N"/>
    <property type="match status" value="1"/>
</dbReference>
<dbReference type="SUPFAM" id="SSF55200">
    <property type="entry name" value="Translation initiation factor IF3, C-terminal domain"/>
    <property type="match status" value="1"/>
</dbReference>
<dbReference type="SUPFAM" id="SSF54364">
    <property type="entry name" value="Translation initiation factor IF3, N-terminal domain"/>
    <property type="match status" value="1"/>
</dbReference>
<dbReference type="PROSITE" id="PS00938">
    <property type="entry name" value="IF3"/>
    <property type="match status" value="1"/>
</dbReference>
<comment type="function">
    <text evidence="1">IF-3 binds to the 30S ribosomal subunit and shifts the equilibrium between 70S ribosomes and their 50S and 30S subunits in favor of the free subunits, thus enhancing the availability of 30S subunits on which protein synthesis initiation begins.</text>
</comment>
<comment type="subunit">
    <text evidence="1">Monomer.</text>
</comment>
<comment type="subcellular location">
    <subcellularLocation>
        <location evidence="1">Cytoplasm</location>
    </subcellularLocation>
</comment>
<comment type="similarity">
    <text evidence="1">Belongs to the IF-3 family.</text>
</comment>